<name>BGH3A_BACO1</name>
<proteinExistence type="evidence at protein level"/>
<accession>A7LXS8</accession>
<gene>
    <name type="ORF">BACOVA_02644</name>
</gene>
<reference key="1">
    <citation type="submission" date="2007-04" db="EMBL/GenBank/DDBJ databases">
        <title>Draft genome sequence of Bacteroides ovatus (ATCC 8483).</title>
        <authorList>
            <person name="Sudarsanam P."/>
            <person name="Ley R."/>
            <person name="Guruge J."/>
            <person name="Turnbaugh P.J."/>
            <person name="Mahowald M."/>
            <person name="Liep D."/>
            <person name="Gordon J."/>
        </authorList>
    </citation>
    <scope>NUCLEOTIDE SEQUENCE [LARGE SCALE GENOMIC DNA]</scope>
    <source>
        <strain>ATCC 8483 / DSM 1896 / JCM 5824 / BCRC 10623 / CCUG 4943 / NCTC 11153</strain>
    </source>
</reference>
<reference key="2">
    <citation type="journal article" date="2014" name="Nature">
        <title>A discrete genetic locus confers xyloglucan metabolism in select human gut Bacteroidetes.</title>
        <authorList>
            <person name="Larsbrink J."/>
            <person name="Rogers T.E."/>
            <person name="Hemsworth G.R."/>
            <person name="McKee L.S."/>
            <person name="Tauzin A.S."/>
            <person name="Spadiut O."/>
            <person name="Klinter S."/>
            <person name="Pudlo N.A."/>
            <person name="Urs K."/>
            <person name="Koropatkin N.M."/>
            <person name="Creagh A.L."/>
            <person name="Haynes C.A."/>
            <person name="Kelly A.G."/>
            <person name="Cederholm S.N."/>
            <person name="Davies G.J."/>
            <person name="Martens E.C."/>
            <person name="Brumer H."/>
        </authorList>
    </citation>
    <scope>FUNCTION</scope>
    <scope>CATALYTIC ACTIVITY</scope>
    <scope>BIOPHYSICOCHEMICAL PROPERTIES</scope>
    <scope>PATHWAY</scope>
</reference>
<keyword id="KW-0119">Carbohydrate metabolism</keyword>
<keyword id="KW-0326">Glycosidase</keyword>
<keyword id="KW-0378">Hydrolase</keyword>
<keyword id="KW-0574">Periplasm</keyword>
<keyword id="KW-0624">Polysaccharide degradation</keyword>
<keyword id="KW-0732">Signal</keyword>
<dbReference type="EC" id="3.2.1.21"/>
<dbReference type="EMBL" id="AAXF02000049">
    <property type="protein sequence ID" value="EDO11435.1"/>
    <property type="molecule type" value="Genomic_DNA"/>
</dbReference>
<dbReference type="SMR" id="A7LXS8"/>
<dbReference type="eggNOG" id="COG1472">
    <property type="taxonomic scope" value="Bacteria"/>
</dbReference>
<dbReference type="HOGENOM" id="CLU_004542_4_1_10"/>
<dbReference type="SABIO-RK" id="A7LXS8"/>
<dbReference type="UniPathway" id="UPA01045"/>
<dbReference type="Proteomes" id="UP000005475">
    <property type="component" value="Unassembled WGS sequence"/>
</dbReference>
<dbReference type="GO" id="GO:0042597">
    <property type="term" value="C:periplasmic space"/>
    <property type="evidence" value="ECO:0007669"/>
    <property type="project" value="UniProtKB-SubCell"/>
</dbReference>
<dbReference type="GO" id="GO:0008422">
    <property type="term" value="F:beta-glucosidase activity"/>
    <property type="evidence" value="ECO:0000314"/>
    <property type="project" value="UniProtKB"/>
</dbReference>
<dbReference type="GO" id="GO:0085030">
    <property type="term" value="P:symbiotic process benefiting host"/>
    <property type="evidence" value="ECO:0000314"/>
    <property type="project" value="UniProtKB"/>
</dbReference>
<dbReference type="GO" id="GO:2000899">
    <property type="term" value="P:xyloglucan catabolic process"/>
    <property type="evidence" value="ECO:0000314"/>
    <property type="project" value="UniProtKB"/>
</dbReference>
<dbReference type="FunFam" id="3.40.50.1700:FF:000053">
    <property type="entry name" value="Beta-glucosidase BoGH3A"/>
    <property type="match status" value="1"/>
</dbReference>
<dbReference type="FunFam" id="2.60.40.10:FF:000495">
    <property type="entry name" value="Periplasmic beta-glucosidase"/>
    <property type="match status" value="1"/>
</dbReference>
<dbReference type="Gene3D" id="3.40.50.1700">
    <property type="entry name" value="Glycoside hydrolase family 3 C-terminal domain"/>
    <property type="match status" value="1"/>
</dbReference>
<dbReference type="Gene3D" id="3.20.20.300">
    <property type="entry name" value="Glycoside hydrolase, family 3, N-terminal domain"/>
    <property type="match status" value="1"/>
</dbReference>
<dbReference type="Gene3D" id="2.60.40.10">
    <property type="entry name" value="Immunoglobulins"/>
    <property type="match status" value="1"/>
</dbReference>
<dbReference type="InterPro" id="IPR050288">
    <property type="entry name" value="Cellulose_deg_GH3"/>
</dbReference>
<dbReference type="InterPro" id="IPR026891">
    <property type="entry name" value="Fn3-like"/>
</dbReference>
<dbReference type="InterPro" id="IPR019800">
    <property type="entry name" value="Glyco_hydro_3_AS"/>
</dbReference>
<dbReference type="InterPro" id="IPR002772">
    <property type="entry name" value="Glyco_hydro_3_C"/>
</dbReference>
<dbReference type="InterPro" id="IPR036881">
    <property type="entry name" value="Glyco_hydro_3_C_sf"/>
</dbReference>
<dbReference type="InterPro" id="IPR001764">
    <property type="entry name" value="Glyco_hydro_3_N"/>
</dbReference>
<dbReference type="InterPro" id="IPR036962">
    <property type="entry name" value="Glyco_hydro_3_N_sf"/>
</dbReference>
<dbReference type="InterPro" id="IPR017853">
    <property type="entry name" value="Glycoside_hydrolase_SF"/>
</dbReference>
<dbReference type="InterPro" id="IPR013783">
    <property type="entry name" value="Ig-like_fold"/>
</dbReference>
<dbReference type="PANTHER" id="PTHR42715">
    <property type="entry name" value="BETA-GLUCOSIDASE"/>
    <property type="match status" value="1"/>
</dbReference>
<dbReference type="PANTHER" id="PTHR42715:SF10">
    <property type="entry name" value="BETA-GLUCOSIDASE"/>
    <property type="match status" value="1"/>
</dbReference>
<dbReference type="Pfam" id="PF14310">
    <property type="entry name" value="Fn3-like"/>
    <property type="match status" value="1"/>
</dbReference>
<dbReference type="Pfam" id="PF00933">
    <property type="entry name" value="Glyco_hydro_3"/>
    <property type="match status" value="1"/>
</dbReference>
<dbReference type="Pfam" id="PF01915">
    <property type="entry name" value="Glyco_hydro_3_C"/>
    <property type="match status" value="1"/>
</dbReference>
<dbReference type="PRINTS" id="PR00133">
    <property type="entry name" value="GLHYDRLASE3"/>
</dbReference>
<dbReference type="SMART" id="SM01217">
    <property type="entry name" value="Fn3_like"/>
    <property type="match status" value="1"/>
</dbReference>
<dbReference type="SUPFAM" id="SSF51445">
    <property type="entry name" value="(Trans)glycosidases"/>
    <property type="match status" value="1"/>
</dbReference>
<dbReference type="SUPFAM" id="SSF52279">
    <property type="entry name" value="Beta-D-glucan exohydrolase, C-terminal domain"/>
    <property type="match status" value="1"/>
</dbReference>
<dbReference type="PROSITE" id="PS00775">
    <property type="entry name" value="GLYCOSYL_HYDROL_F3"/>
    <property type="match status" value="1"/>
</dbReference>
<evidence type="ECO:0000250" key="1"/>
<evidence type="ECO:0000255" key="2"/>
<evidence type="ECO:0000269" key="3">
    <source>
    </source>
</evidence>
<evidence type="ECO:0000305" key="4"/>
<evidence type="ECO:0000305" key="5">
    <source>
    </source>
</evidence>
<protein>
    <recommendedName>
        <fullName>Beta-glucosidase BoGH3A</fullName>
        <ecNumber>3.2.1.21</ecNumber>
    </recommendedName>
    <alternativeName>
        <fullName>Glycosyl hydrolase family protein 3A</fullName>
        <shortName>BoGH3A</shortName>
    </alternativeName>
</protein>
<feature type="signal peptide" evidence="2">
    <location>
        <begin position="1"/>
        <end position="26"/>
    </location>
</feature>
<feature type="chain" id="PRO_0000425892" description="Beta-glucosidase BoGH3A">
    <location>
        <begin position="27"/>
        <end position="747"/>
    </location>
</feature>
<feature type="active site" evidence="1">
    <location>
        <position position="273"/>
    </location>
</feature>
<sequence>MIIGIMKTFLLTICFLSVQTGMVAIAQDKEQTPVYLDDTQPIEVRVQDALNRMTVEEKTRLSYAQGKFSSPGCPRLGIPELWMSDGPHGVRAEINWNDWGYAGWTNDSCTAFPALTCLAASWNPLLAAKYGYAIGEEARYREKDVLLGPGVNIYRTPLNGRNFEYMGEDPYLASELCVPYIQGVQKNGVAACVKHYALNNQELWRGHIDVQLSDRALYEIYLPAFKAAVERGKAWSIMGAYNKVRGTHATHHKLLNNDILKGEWNFDGCVITDWGAAHDTYEAAMYGLDIEMGSYTNGLTSESEFGYDDYYLGKSYLKMVREGKIPMEVVNDKAARVLRLIFRTAMNRRKPFGALTSEEHYRTAYEIATEGIVLLKNGTGKKQPALLPVPQGKYKRILVVGDNATRNLMLGGGSSELKVQKVISSLDGIKAKFGDGVVYAQGYTSGRPMYGRADVIPQVTVDSLRNDAVEKAMNSDLVIFVGGLNKNHFQDCEGGDRLSYELPFAQNELIEALLKVNKNLVAVIVSGNAVEMPWVKEIPSIVQSWYLGSVGGEALADVLSGEVTPSGKLPFSYPVKLEDCPAHFFGEISYPGDSIRQEYKEDILVGYRWYDTKKVQPLFPFGYGMSYTTFEYSKPVISAQTMNTDGSIDVSVKVKNTGKVAGKEIIQLYIGDEECSVLRPVKELKDFRKVQLLPNEEKEVKFTIKPEALQFFDDKQRTWVAEPGKFKAYIAASSSDIRGTVTFEYIQ</sequence>
<comment type="function">
    <text evidence="3">Catalyzes the hydrolysis of terminal, non-reducing beta-D-glucosyl residues with release of beta-D-glucose in xyloglucan degradation, leading to remove the backbone 'G' units.</text>
</comment>
<comment type="catalytic activity">
    <reaction evidence="3">
        <text>Hydrolysis of terminal, non-reducing beta-D-glucosyl residues with release of beta-D-glucose.</text>
        <dbReference type="EC" id="3.2.1.21"/>
    </reaction>
</comment>
<comment type="biophysicochemical properties">
    <kinetics>
        <KM evidence="3">2.49 mM for cellotetraose</KM>
        <KM evidence="3">0.698 mM for cellohexaose</KM>
        <text>kcat is 65.0 sec(-1) for cellotetraose. kcat is 0.62 sec(-1) for cellohexaose.</text>
    </kinetics>
    <phDependence>
        <text evidence="3">Optimum pH is 6.0-7.0.</text>
    </phDependence>
</comment>
<comment type="pathway">
    <text evidence="3">Glucan metabolism; xyloglucan degradation.</text>
</comment>
<comment type="subcellular location">
    <subcellularLocation>
        <location evidence="4">Periplasm</location>
    </subcellularLocation>
    <text evidence="3">Periplasmic localization is predicted by analogy with the archetypal sus locus.</text>
</comment>
<comment type="miscellaneous">
    <text evidence="5">Gut bacteria supply the human body with energy from dietary polysaccharides through glycosidases that are absent in the human genome. Xyloglucans are a ubiquitous family of highly branched plant cell wall polysaccharides present in the vegetables we consume. Enzymes involved in xyloglucan degradation mediate the conversion of otherwise indigestible plant polysaccharides to short-chain fatty acids (PubMed:24463512).</text>
</comment>
<comment type="similarity">
    <text evidence="4">Belongs to the glycosyl hydrolase 3 family.</text>
</comment>
<organism>
    <name type="scientific">Bacteroides ovatus (strain ATCC 8483 / DSM 1896 / JCM 5824 / BCRC 10623 / CCUG 4943 / NCTC 11153)</name>
    <dbReference type="NCBI Taxonomy" id="411476"/>
    <lineage>
        <taxon>Bacteria</taxon>
        <taxon>Pseudomonadati</taxon>
        <taxon>Bacteroidota</taxon>
        <taxon>Bacteroidia</taxon>
        <taxon>Bacteroidales</taxon>
        <taxon>Bacteroidaceae</taxon>
        <taxon>Bacteroides</taxon>
    </lineage>
</organism>